<keyword id="KW-0067">ATP-binding</keyword>
<keyword id="KW-0414">Isoprene biosynthesis</keyword>
<keyword id="KW-0418">Kinase</keyword>
<keyword id="KW-0547">Nucleotide-binding</keyword>
<keyword id="KW-0808">Transferase</keyword>
<accession>A1AVE9</accession>
<dbReference type="EC" id="2.7.1.148" evidence="1"/>
<dbReference type="EMBL" id="CP000488">
    <property type="protein sequence ID" value="ABL01906.1"/>
    <property type="molecule type" value="Genomic_DNA"/>
</dbReference>
<dbReference type="SMR" id="A1AVE9"/>
<dbReference type="STRING" id="413404.Rmag_0110"/>
<dbReference type="KEGG" id="rma:Rmag_0110"/>
<dbReference type="eggNOG" id="COG1947">
    <property type="taxonomic scope" value="Bacteria"/>
</dbReference>
<dbReference type="HOGENOM" id="CLU_053057_3_0_6"/>
<dbReference type="OrthoDB" id="9809438at2"/>
<dbReference type="UniPathway" id="UPA00056">
    <property type="reaction ID" value="UER00094"/>
</dbReference>
<dbReference type="Proteomes" id="UP000002587">
    <property type="component" value="Chromosome"/>
</dbReference>
<dbReference type="GO" id="GO:0050515">
    <property type="term" value="F:4-(cytidine 5'-diphospho)-2-C-methyl-D-erythritol kinase activity"/>
    <property type="evidence" value="ECO:0007669"/>
    <property type="project" value="UniProtKB-UniRule"/>
</dbReference>
<dbReference type="GO" id="GO:0005524">
    <property type="term" value="F:ATP binding"/>
    <property type="evidence" value="ECO:0007669"/>
    <property type="project" value="UniProtKB-UniRule"/>
</dbReference>
<dbReference type="GO" id="GO:0019288">
    <property type="term" value="P:isopentenyl diphosphate biosynthetic process, methylerythritol 4-phosphate pathway"/>
    <property type="evidence" value="ECO:0007669"/>
    <property type="project" value="UniProtKB-UniRule"/>
</dbReference>
<dbReference type="GO" id="GO:0016114">
    <property type="term" value="P:terpenoid biosynthetic process"/>
    <property type="evidence" value="ECO:0007669"/>
    <property type="project" value="InterPro"/>
</dbReference>
<dbReference type="Gene3D" id="3.30.230.10">
    <property type="match status" value="1"/>
</dbReference>
<dbReference type="Gene3D" id="3.30.70.890">
    <property type="entry name" value="GHMP kinase, C-terminal domain"/>
    <property type="match status" value="1"/>
</dbReference>
<dbReference type="HAMAP" id="MF_00061">
    <property type="entry name" value="IspE"/>
    <property type="match status" value="1"/>
</dbReference>
<dbReference type="InterPro" id="IPR036554">
    <property type="entry name" value="GHMP_kinase_C_sf"/>
</dbReference>
<dbReference type="InterPro" id="IPR006204">
    <property type="entry name" value="GHMP_kinase_N_dom"/>
</dbReference>
<dbReference type="InterPro" id="IPR004424">
    <property type="entry name" value="IspE"/>
</dbReference>
<dbReference type="InterPro" id="IPR020568">
    <property type="entry name" value="Ribosomal_Su5_D2-typ_SF"/>
</dbReference>
<dbReference type="InterPro" id="IPR014721">
    <property type="entry name" value="Ribsml_uS5_D2-typ_fold_subgr"/>
</dbReference>
<dbReference type="NCBIfam" id="TIGR00154">
    <property type="entry name" value="ispE"/>
    <property type="match status" value="1"/>
</dbReference>
<dbReference type="PANTHER" id="PTHR43527">
    <property type="entry name" value="4-DIPHOSPHOCYTIDYL-2-C-METHYL-D-ERYTHRITOL KINASE, CHLOROPLASTIC"/>
    <property type="match status" value="1"/>
</dbReference>
<dbReference type="PANTHER" id="PTHR43527:SF2">
    <property type="entry name" value="4-DIPHOSPHOCYTIDYL-2-C-METHYL-D-ERYTHRITOL KINASE, CHLOROPLASTIC"/>
    <property type="match status" value="1"/>
</dbReference>
<dbReference type="Pfam" id="PF00288">
    <property type="entry name" value="GHMP_kinases_N"/>
    <property type="match status" value="1"/>
</dbReference>
<dbReference type="PIRSF" id="PIRSF010376">
    <property type="entry name" value="IspE"/>
    <property type="match status" value="1"/>
</dbReference>
<dbReference type="SUPFAM" id="SSF55060">
    <property type="entry name" value="GHMP Kinase, C-terminal domain"/>
    <property type="match status" value="1"/>
</dbReference>
<dbReference type="SUPFAM" id="SSF54211">
    <property type="entry name" value="Ribosomal protein S5 domain 2-like"/>
    <property type="match status" value="1"/>
</dbReference>
<organism>
    <name type="scientific">Ruthia magnifica subsp. Calyptogena magnifica</name>
    <dbReference type="NCBI Taxonomy" id="413404"/>
    <lineage>
        <taxon>Bacteria</taxon>
        <taxon>Pseudomonadati</taxon>
        <taxon>Pseudomonadota</taxon>
        <taxon>Gammaproteobacteria</taxon>
        <taxon>Candidatus Pseudothioglobaceae</taxon>
        <taxon>Candidatus Ruthturnera</taxon>
    </lineage>
</organism>
<feature type="chain" id="PRO_1000007885" description="4-diphosphocytidyl-2-C-methyl-D-erythritol kinase">
    <location>
        <begin position="1"/>
        <end position="285"/>
    </location>
</feature>
<feature type="active site" evidence="1">
    <location>
        <position position="10"/>
    </location>
</feature>
<feature type="active site" evidence="1">
    <location>
        <position position="135"/>
    </location>
</feature>
<feature type="binding site" evidence="1">
    <location>
        <begin position="93"/>
        <end position="103"/>
    </location>
    <ligand>
        <name>ATP</name>
        <dbReference type="ChEBI" id="CHEBI:30616"/>
    </ligand>
</feature>
<reference key="1">
    <citation type="journal article" date="2007" name="Science">
        <title>The Calyptogena magnifica chemoautotrophic symbiont genome.</title>
        <authorList>
            <person name="Newton I.L.G."/>
            <person name="Woyke T."/>
            <person name="Auchtung T.A."/>
            <person name="Dilly G.F."/>
            <person name="Dutton R.J."/>
            <person name="Fisher M.C."/>
            <person name="Fontanez K.M."/>
            <person name="Lau E."/>
            <person name="Stewart F.J."/>
            <person name="Richardson P.M."/>
            <person name="Barry K.W."/>
            <person name="Saunders E."/>
            <person name="Detter J.C."/>
            <person name="Wu D."/>
            <person name="Eisen J.A."/>
            <person name="Cavanaugh C.M."/>
        </authorList>
    </citation>
    <scope>NUCLEOTIDE SEQUENCE [LARGE SCALE GENOMIC DNA]</scope>
</reference>
<protein>
    <recommendedName>
        <fullName evidence="1">4-diphosphocytidyl-2-C-methyl-D-erythritol kinase</fullName>
        <shortName evidence="1">CMK</shortName>
        <ecNumber evidence="1">2.7.1.148</ecNumber>
    </recommendedName>
    <alternativeName>
        <fullName evidence="1">4-(cytidine-5'-diphospho)-2-C-methyl-D-erythritol kinase</fullName>
    </alternativeName>
</protein>
<proteinExistence type="inferred from homology"/>
<name>ISPE_RUTMC</name>
<gene>
    <name evidence="1" type="primary">ispE</name>
    <name type="ordered locus">Rmag_0110</name>
</gene>
<evidence type="ECO:0000255" key="1">
    <source>
        <dbReference type="HAMAP-Rule" id="MF_00061"/>
    </source>
</evidence>
<comment type="function">
    <text evidence="1">Catalyzes the phosphorylation of the position 2 hydroxy group of 4-diphosphocytidyl-2C-methyl-D-erythritol.</text>
</comment>
<comment type="catalytic activity">
    <reaction evidence="1">
        <text>4-CDP-2-C-methyl-D-erythritol + ATP = 4-CDP-2-C-methyl-D-erythritol 2-phosphate + ADP + H(+)</text>
        <dbReference type="Rhea" id="RHEA:18437"/>
        <dbReference type="ChEBI" id="CHEBI:15378"/>
        <dbReference type="ChEBI" id="CHEBI:30616"/>
        <dbReference type="ChEBI" id="CHEBI:57823"/>
        <dbReference type="ChEBI" id="CHEBI:57919"/>
        <dbReference type="ChEBI" id="CHEBI:456216"/>
        <dbReference type="EC" id="2.7.1.148"/>
    </reaction>
</comment>
<comment type="pathway">
    <text evidence="1">Isoprenoid biosynthesis; isopentenyl diphosphate biosynthesis via DXP pathway; isopentenyl diphosphate from 1-deoxy-D-xylulose 5-phosphate: step 3/6.</text>
</comment>
<comment type="similarity">
    <text evidence="1">Belongs to the GHMP kinase family. IspE subfamily.</text>
</comment>
<sequence>MSSTWLAPAKINLFLHINNKREDGYHNLQTIFQMLDYYDELKFSITNGGVIKRINGNEDVEQSQDLIVKAAKVLQEYTGTTLGANLSIVKNIPIGGGLGGGSSDAATTLVALNQLWDTKLTQPQLMKLGLNLGADVPVFIFAKSAWAEGIGEILSPIKMPNYYYLVVFINKHTSTKEIFSHYALTMSKPQGKIAKFSELINTHNDCLQAAIALEAEIGVALKHLNTCANHISQVRMSGTGSCVFNEFLTEKDALAAAKKVPKKWMSFVTRAINTSPIHSWAVAKR</sequence>